<protein>
    <recommendedName>
        <fullName evidence="1">Acetate kinase</fullName>
        <ecNumber evidence="1">2.7.2.1</ecNumber>
    </recommendedName>
    <alternativeName>
        <fullName evidence="1">Acetokinase</fullName>
    </alternativeName>
</protein>
<organism>
    <name type="scientific">Parabacteroides distasonis (strain ATCC 8503 / DSM 20701 / CIP 104284 / JCM 5825 / NCTC 11152)</name>
    <dbReference type="NCBI Taxonomy" id="435591"/>
    <lineage>
        <taxon>Bacteria</taxon>
        <taxon>Pseudomonadati</taxon>
        <taxon>Bacteroidota</taxon>
        <taxon>Bacteroidia</taxon>
        <taxon>Bacteroidales</taxon>
        <taxon>Tannerellaceae</taxon>
        <taxon>Parabacteroides</taxon>
    </lineage>
</organism>
<evidence type="ECO:0000255" key="1">
    <source>
        <dbReference type="HAMAP-Rule" id="MF_00020"/>
    </source>
</evidence>
<accession>A6LHA9</accession>
<keyword id="KW-0067">ATP-binding</keyword>
<keyword id="KW-0963">Cytoplasm</keyword>
<keyword id="KW-0418">Kinase</keyword>
<keyword id="KW-0460">Magnesium</keyword>
<keyword id="KW-0479">Metal-binding</keyword>
<keyword id="KW-0547">Nucleotide-binding</keyword>
<keyword id="KW-1185">Reference proteome</keyword>
<keyword id="KW-0808">Transferase</keyword>
<comment type="function">
    <text evidence="1">Catalyzes the formation of acetyl phosphate from acetate and ATP. Can also catalyze the reverse reaction.</text>
</comment>
<comment type="catalytic activity">
    <reaction evidence="1">
        <text>acetate + ATP = acetyl phosphate + ADP</text>
        <dbReference type="Rhea" id="RHEA:11352"/>
        <dbReference type="ChEBI" id="CHEBI:22191"/>
        <dbReference type="ChEBI" id="CHEBI:30089"/>
        <dbReference type="ChEBI" id="CHEBI:30616"/>
        <dbReference type="ChEBI" id="CHEBI:456216"/>
        <dbReference type="EC" id="2.7.2.1"/>
    </reaction>
</comment>
<comment type="cofactor">
    <cofactor evidence="1">
        <name>Mg(2+)</name>
        <dbReference type="ChEBI" id="CHEBI:18420"/>
    </cofactor>
    <cofactor evidence="1">
        <name>Mn(2+)</name>
        <dbReference type="ChEBI" id="CHEBI:29035"/>
    </cofactor>
    <text evidence="1">Mg(2+). Can also accept Mn(2+).</text>
</comment>
<comment type="pathway">
    <text evidence="1">Metabolic intermediate biosynthesis; acetyl-CoA biosynthesis; acetyl-CoA from acetate: step 1/2.</text>
</comment>
<comment type="subunit">
    <text evidence="1">Homodimer.</text>
</comment>
<comment type="subcellular location">
    <subcellularLocation>
        <location evidence="1">Cytoplasm</location>
    </subcellularLocation>
</comment>
<comment type="similarity">
    <text evidence="1">Belongs to the acetokinase family.</text>
</comment>
<feature type="chain" id="PRO_1000002245" description="Acetate kinase">
    <location>
        <begin position="1"/>
        <end position="400"/>
    </location>
</feature>
<feature type="active site" description="Proton donor/acceptor" evidence="1">
    <location>
        <position position="148"/>
    </location>
</feature>
<feature type="binding site" evidence="1">
    <location>
        <position position="7"/>
    </location>
    <ligand>
        <name>Mg(2+)</name>
        <dbReference type="ChEBI" id="CHEBI:18420"/>
    </ligand>
</feature>
<feature type="binding site" evidence="1">
    <location>
        <position position="14"/>
    </location>
    <ligand>
        <name>ATP</name>
        <dbReference type="ChEBI" id="CHEBI:30616"/>
    </ligand>
</feature>
<feature type="binding site" evidence="1">
    <location>
        <position position="91"/>
    </location>
    <ligand>
        <name>substrate</name>
    </ligand>
</feature>
<feature type="binding site" evidence="1">
    <location>
        <begin position="208"/>
        <end position="212"/>
    </location>
    <ligand>
        <name>ATP</name>
        <dbReference type="ChEBI" id="CHEBI:30616"/>
    </ligand>
</feature>
<feature type="binding site" evidence="1">
    <location>
        <begin position="283"/>
        <end position="285"/>
    </location>
    <ligand>
        <name>ATP</name>
        <dbReference type="ChEBI" id="CHEBI:30616"/>
    </ligand>
</feature>
<feature type="binding site" evidence="1">
    <location>
        <begin position="331"/>
        <end position="335"/>
    </location>
    <ligand>
        <name>ATP</name>
        <dbReference type="ChEBI" id="CHEBI:30616"/>
    </ligand>
</feature>
<feature type="binding site" evidence="1">
    <location>
        <position position="385"/>
    </location>
    <ligand>
        <name>Mg(2+)</name>
        <dbReference type="ChEBI" id="CHEBI:18420"/>
    </ligand>
</feature>
<feature type="site" description="Transition state stabilizer" evidence="1">
    <location>
        <position position="180"/>
    </location>
</feature>
<feature type="site" description="Transition state stabilizer" evidence="1">
    <location>
        <position position="241"/>
    </location>
</feature>
<name>ACKA_PARD8</name>
<sequence length="400" mass="43451">MKILVLNCGSSSIKYKLFDMTSGEVMAQGGIEKIGLPGAFLKLTDKDGKKVVIEREIPGHQEGIEFILSVLTDATYGCIKDYKEIDAVGHRVVHGGEEFASSVLINQDVINKVIECSDLAPLHNPANLKGVRAMEALIPGIPQVAVFDTAFHQTMPDYAYMYGLPYEMYKKYGVRRYGFHGTSHRYVSRRACEILGVPYEDQKIITAHVGNGGSITAIKNGKSVDTSMGLTPVEGLLMGTRCGDVDAGALSFIMDKEGMDGAGLSDLINKRSGVAGLSGISSDMREIEAAVAAGNPRAIMTLNVYNYRIKKYIGAYAAAMGGCDILVWTGGVGENQWATRRAVCENMEYMGMKIDVEKNEGMRGEEMVISTPDSKVTIIVVPTDEEFMIAADTLEILDKK</sequence>
<reference key="1">
    <citation type="journal article" date="2007" name="PLoS Biol.">
        <title>Evolution of symbiotic bacteria in the distal human intestine.</title>
        <authorList>
            <person name="Xu J."/>
            <person name="Mahowald M.A."/>
            <person name="Ley R.E."/>
            <person name="Lozupone C.A."/>
            <person name="Hamady M."/>
            <person name="Martens E.C."/>
            <person name="Henrissat B."/>
            <person name="Coutinho P.M."/>
            <person name="Minx P."/>
            <person name="Latreille P."/>
            <person name="Cordum H."/>
            <person name="Van Brunt A."/>
            <person name="Kim K."/>
            <person name="Fulton R.S."/>
            <person name="Fulton L.A."/>
            <person name="Clifton S.W."/>
            <person name="Wilson R.K."/>
            <person name="Knight R.D."/>
            <person name="Gordon J.I."/>
        </authorList>
    </citation>
    <scope>NUCLEOTIDE SEQUENCE [LARGE SCALE GENOMIC DNA]</scope>
    <source>
        <strain>ATCC 8503 / DSM 20701 / CIP 104284 / JCM 5825 / NCTC 11152</strain>
    </source>
</reference>
<dbReference type="EC" id="2.7.2.1" evidence="1"/>
<dbReference type="EMBL" id="CP000140">
    <property type="protein sequence ID" value="ABR45073.1"/>
    <property type="molecule type" value="Genomic_DNA"/>
</dbReference>
<dbReference type="RefSeq" id="WP_005859763.1">
    <property type="nucleotide sequence ID" value="NZ_LR215978.1"/>
</dbReference>
<dbReference type="SMR" id="A6LHA9"/>
<dbReference type="STRING" id="435591.BDI_3370"/>
<dbReference type="PaxDb" id="435591-BDI_3370"/>
<dbReference type="KEGG" id="pdi:BDI_3370"/>
<dbReference type="eggNOG" id="COG0282">
    <property type="taxonomic scope" value="Bacteria"/>
</dbReference>
<dbReference type="HOGENOM" id="CLU_020352_0_1_10"/>
<dbReference type="BioCyc" id="PDIS435591:G1G5A-3460-MONOMER"/>
<dbReference type="UniPathway" id="UPA00340">
    <property type="reaction ID" value="UER00458"/>
</dbReference>
<dbReference type="Proteomes" id="UP000000566">
    <property type="component" value="Chromosome"/>
</dbReference>
<dbReference type="GO" id="GO:0005737">
    <property type="term" value="C:cytoplasm"/>
    <property type="evidence" value="ECO:0007669"/>
    <property type="project" value="UniProtKB-SubCell"/>
</dbReference>
<dbReference type="GO" id="GO:0008776">
    <property type="term" value="F:acetate kinase activity"/>
    <property type="evidence" value="ECO:0007669"/>
    <property type="project" value="UniProtKB-UniRule"/>
</dbReference>
<dbReference type="GO" id="GO:0005524">
    <property type="term" value="F:ATP binding"/>
    <property type="evidence" value="ECO:0007669"/>
    <property type="project" value="UniProtKB-KW"/>
</dbReference>
<dbReference type="GO" id="GO:0000287">
    <property type="term" value="F:magnesium ion binding"/>
    <property type="evidence" value="ECO:0007669"/>
    <property type="project" value="UniProtKB-UniRule"/>
</dbReference>
<dbReference type="GO" id="GO:0006083">
    <property type="term" value="P:acetate metabolic process"/>
    <property type="evidence" value="ECO:0007669"/>
    <property type="project" value="TreeGrafter"/>
</dbReference>
<dbReference type="GO" id="GO:0006085">
    <property type="term" value="P:acetyl-CoA biosynthetic process"/>
    <property type="evidence" value="ECO:0007669"/>
    <property type="project" value="UniProtKB-UniRule"/>
</dbReference>
<dbReference type="CDD" id="cd24010">
    <property type="entry name" value="ASKHA_NBD_AcK_PK"/>
    <property type="match status" value="1"/>
</dbReference>
<dbReference type="Gene3D" id="3.30.420.40">
    <property type="match status" value="2"/>
</dbReference>
<dbReference type="HAMAP" id="MF_00020">
    <property type="entry name" value="Acetate_kinase"/>
    <property type="match status" value="1"/>
</dbReference>
<dbReference type="InterPro" id="IPR004372">
    <property type="entry name" value="Ac/propionate_kinase"/>
</dbReference>
<dbReference type="InterPro" id="IPR000890">
    <property type="entry name" value="Aliphatic_acid_kin_short-chain"/>
</dbReference>
<dbReference type="InterPro" id="IPR023865">
    <property type="entry name" value="Aliphatic_acid_kinase_CS"/>
</dbReference>
<dbReference type="InterPro" id="IPR043129">
    <property type="entry name" value="ATPase_NBD"/>
</dbReference>
<dbReference type="NCBIfam" id="TIGR00016">
    <property type="entry name" value="ackA"/>
    <property type="match status" value="1"/>
</dbReference>
<dbReference type="PANTHER" id="PTHR21060">
    <property type="entry name" value="ACETATE KINASE"/>
    <property type="match status" value="1"/>
</dbReference>
<dbReference type="PANTHER" id="PTHR21060:SF15">
    <property type="entry name" value="ACETATE KINASE-RELATED"/>
    <property type="match status" value="1"/>
</dbReference>
<dbReference type="Pfam" id="PF00871">
    <property type="entry name" value="Acetate_kinase"/>
    <property type="match status" value="1"/>
</dbReference>
<dbReference type="PIRSF" id="PIRSF000722">
    <property type="entry name" value="Acetate_prop_kin"/>
    <property type="match status" value="1"/>
</dbReference>
<dbReference type="PRINTS" id="PR00471">
    <property type="entry name" value="ACETATEKNASE"/>
</dbReference>
<dbReference type="SUPFAM" id="SSF53067">
    <property type="entry name" value="Actin-like ATPase domain"/>
    <property type="match status" value="2"/>
</dbReference>
<dbReference type="PROSITE" id="PS01075">
    <property type="entry name" value="ACETATE_KINASE_1"/>
    <property type="match status" value="1"/>
</dbReference>
<dbReference type="PROSITE" id="PS01076">
    <property type="entry name" value="ACETATE_KINASE_2"/>
    <property type="match status" value="1"/>
</dbReference>
<proteinExistence type="inferred from homology"/>
<gene>
    <name evidence="1" type="primary">ackA</name>
    <name type="ordered locus">BDI_3370</name>
</gene>